<organism>
    <name type="scientific">Histophilus somni (strain 129Pt)</name>
    <name type="common">Haemophilus somnus</name>
    <dbReference type="NCBI Taxonomy" id="205914"/>
    <lineage>
        <taxon>Bacteria</taxon>
        <taxon>Pseudomonadati</taxon>
        <taxon>Pseudomonadota</taxon>
        <taxon>Gammaproteobacteria</taxon>
        <taxon>Pasteurellales</taxon>
        <taxon>Pasteurellaceae</taxon>
        <taxon>Histophilus</taxon>
    </lineage>
</organism>
<keyword id="KW-0963">Cytoplasm</keyword>
<keyword id="KW-0489">Methyltransferase</keyword>
<keyword id="KW-0698">rRNA processing</keyword>
<keyword id="KW-0949">S-adenosyl-L-methionine</keyword>
<keyword id="KW-0808">Transferase</keyword>
<name>RLME_HISS1</name>
<accession>Q0I2R1</accession>
<protein>
    <recommendedName>
        <fullName evidence="1">Ribosomal RNA large subunit methyltransferase E</fullName>
        <ecNumber evidence="1">2.1.1.166</ecNumber>
    </recommendedName>
    <alternativeName>
        <fullName evidence="1">23S rRNA Um2552 methyltransferase</fullName>
    </alternativeName>
    <alternativeName>
        <fullName evidence="1">rRNA (uridine-2'-O-)-methyltransferase</fullName>
    </alternativeName>
</protein>
<evidence type="ECO:0000255" key="1">
    <source>
        <dbReference type="HAMAP-Rule" id="MF_01547"/>
    </source>
</evidence>
<sequence length="209" mass="23616">MGKKKRSASSSRWLNEHFKDPFVQKAHKQKLRSRAYFKLDEIQQSDRLFKHGMTVVDLGAAPGGWSQYAIRQIGDLGRVIACDILEMDPIVGVDFLQGDFRDENVLQALLERVGEKKVDVVMSDMAPNFSGMPAVDIPRAMYLVELALDMCKQVLATNGCFVVKVFQGEGFDDYLKEIRSLFNTVKVRKPEASRGRSREVYIVAMGYMG</sequence>
<feature type="chain" id="PRO_0000282751" description="Ribosomal RNA large subunit methyltransferase E">
    <location>
        <begin position="1"/>
        <end position="209"/>
    </location>
</feature>
<feature type="domain" description="TRAM" evidence="1">
    <location>
        <begin position="191"/>
        <end position="209"/>
    </location>
</feature>
<feature type="active site" description="Proton acceptor" evidence="1">
    <location>
        <position position="164"/>
    </location>
</feature>
<feature type="binding site" evidence="1">
    <location>
        <position position="63"/>
    </location>
    <ligand>
        <name>S-adenosyl-L-methionine</name>
        <dbReference type="ChEBI" id="CHEBI:59789"/>
    </ligand>
</feature>
<feature type="binding site" evidence="1">
    <location>
        <position position="65"/>
    </location>
    <ligand>
        <name>S-adenosyl-L-methionine</name>
        <dbReference type="ChEBI" id="CHEBI:59789"/>
    </ligand>
</feature>
<feature type="binding site" evidence="1">
    <location>
        <position position="83"/>
    </location>
    <ligand>
        <name>S-adenosyl-L-methionine</name>
        <dbReference type="ChEBI" id="CHEBI:59789"/>
    </ligand>
</feature>
<feature type="binding site" evidence="1">
    <location>
        <position position="99"/>
    </location>
    <ligand>
        <name>S-adenosyl-L-methionine</name>
        <dbReference type="ChEBI" id="CHEBI:59789"/>
    </ligand>
</feature>
<feature type="binding site" evidence="1">
    <location>
        <position position="124"/>
    </location>
    <ligand>
        <name>S-adenosyl-L-methionine</name>
        <dbReference type="ChEBI" id="CHEBI:59789"/>
    </ligand>
</feature>
<proteinExistence type="inferred from homology"/>
<dbReference type="EC" id="2.1.1.166" evidence="1"/>
<dbReference type="EMBL" id="CP000436">
    <property type="protein sequence ID" value="ABI24999.1"/>
    <property type="molecule type" value="Genomic_DNA"/>
</dbReference>
<dbReference type="SMR" id="Q0I2R1"/>
<dbReference type="KEGG" id="hso:HS_0724"/>
<dbReference type="eggNOG" id="COG0293">
    <property type="taxonomic scope" value="Bacteria"/>
</dbReference>
<dbReference type="HOGENOM" id="CLU_009422_4_0_6"/>
<dbReference type="GO" id="GO:0005737">
    <property type="term" value="C:cytoplasm"/>
    <property type="evidence" value="ECO:0007669"/>
    <property type="project" value="UniProtKB-SubCell"/>
</dbReference>
<dbReference type="GO" id="GO:0008650">
    <property type="term" value="F:rRNA (uridine-2'-O-)-methyltransferase activity"/>
    <property type="evidence" value="ECO:0007669"/>
    <property type="project" value="UniProtKB-UniRule"/>
</dbReference>
<dbReference type="FunFam" id="3.40.50.150:FF:000005">
    <property type="entry name" value="Ribosomal RNA large subunit methyltransferase E"/>
    <property type="match status" value="1"/>
</dbReference>
<dbReference type="Gene3D" id="3.40.50.150">
    <property type="entry name" value="Vaccinia Virus protein VP39"/>
    <property type="match status" value="1"/>
</dbReference>
<dbReference type="HAMAP" id="MF_01547">
    <property type="entry name" value="RNA_methyltr_E"/>
    <property type="match status" value="1"/>
</dbReference>
<dbReference type="InterPro" id="IPR050082">
    <property type="entry name" value="RNA_methyltr_RlmE"/>
</dbReference>
<dbReference type="InterPro" id="IPR002877">
    <property type="entry name" value="RNA_MeTrfase_FtsJ_dom"/>
</dbReference>
<dbReference type="InterPro" id="IPR015507">
    <property type="entry name" value="rRNA-MeTfrase_E"/>
</dbReference>
<dbReference type="InterPro" id="IPR004512">
    <property type="entry name" value="rRNA_MeTrfase_gammaproteobac"/>
</dbReference>
<dbReference type="InterPro" id="IPR029063">
    <property type="entry name" value="SAM-dependent_MTases_sf"/>
</dbReference>
<dbReference type="NCBIfam" id="NF008390">
    <property type="entry name" value="PRK11188.1"/>
    <property type="match status" value="1"/>
</dbReference>
<dbReference type="NCBIfam" id="TIGR00438">
    <property type="entry name" value="rrmJ"/>
    <property type="match status" value="1"/>
</dbReference>
<dbReference type="PANTHER" id="PTHR10920">
    <property type="entry name" value="RIBOSOMAL RNA METHYLTRANSFERASE"/>
    <property type="match status" value="1"/>
</dbReference>
<dbReference type="PANTHER" id="PTHR10920:SF18">
    <property type="entry name" value="RRNA METHYLTRANSFERASE 2, MITOCHONDRIAL"/>
    <property type="match status" value="1"/>
</dbReference>
<dbReference type="Pfam" id="PF01728">
    <property type="entry name" value="FtsJ"/>
    <property type="match status" value="1"/>
</dbReference>
<dbReference type="PIRSF" id="PIRSF005461">
    <property type="entry name" value="23S_rRNA_mtase"/>
    <property type="match status" value="1"/>
</dbReference>
<dbReference type="SUPFAM" id="SSF53335">
    <property type="entry name" value="S-adenosyl-L-methionine-dependent methyltransferases"/>
    <property type="match status" value="1"/>
</dbReference>
<comment type="function">
    <text evidence="1">Specifically methylates the uridine in position 2552 of 23S rRNA at the 2'-O position of the ribose in the fully assembled 50S ribosomal subunit.</text>
</comment>
<comment type="catalytic activity">
    <reaction evidence="1">
        <text>uridine(2552) in 23S rRNA + S-adenosyl-L-methionine = 2'-O-methyluridine(2552) in 23S rRNA + S-adenosyl-L-homocysteine + H(+)</text>
        <dbReference type="Rhea" id="RHEA:42720"/>
        <dbReference type="Rhea" id="RHEA-COMP:10202"/>
        <dbReference type="Rhea" id="RHEA-COMP:10203"/>
        <dbReference type="ChEBI" id="CHEBI:15378"/>
        <dbReference type="ChEBI" id="CHEBI:57856"/>
        <dbReference type="ChEBI" id="CHEBI:59789"/>
        <dbReference type="ChEBI" id="CHEBI:65315"/>
        <dbReference type="ChEBI" id="CHEBI:74478"/>
        <dbReference type="EC" id="2.1.1.166"/>
    </reaction>
</comment>
<comment type="subcellular location">
    <subcellularLocation>
        <location evidence="1">Cytoplasm</location>
    </subcellularLocation>
</comment>
<comment type="similarity">
    <text evidence="1">Belongs to the class I-like SAM-binding methyltransferase superfamily. RNA methyltransferase RlmE family.</text>
</comment>
<reference key="1">
    <citation type="journal article" date="2007" name="J. Bacteriol.">
        <title>Complete genome sequence of Haemophilus somnus (Histophilus somni) strain 129Pt and comparison to Haemophilus ducreyi 35000HP and Haemophilus influenzae Rd.</title>
        <authorList>
            <person name="Challacombe J.F."/>
            <person name="Duncan A.J."/>
            <person name="Brettin T.S."/>
            <person name="Bruce D."/>
            <person name="Chertkov O."/>
            <person name="Detter J.C."/>
            <person name="Han C.S."/>
            <person name="Misra M."/>
            <person name="Richardson P."/>
            <person name="Tapia R."/>
            <person name="Thayer N."/>
            <person name="Xie G."/>
            <person name="Inzana T.J."/>
        </authorList>
    </citation>
    <scope>NUCLEOTIDE SEQUENCE [LARGE SCALE GENOMIC DNA]</scope>
    <source>
        <strain>129Pt</strain>
    </source>
</reference>
<gene>
    <name evidence="1" type="primary">rlmE</name>
    <name evidence="1" type="synonym">ftsJ</name>
    <name evidence="1" type="synonym">rrmJ</name>
    <name type="ordered locus">HS_0724</name>
</gene>